<protein>
    <recommendedName>
        <fullName evidence="1">Small ribosomal subunit protein uS11c</fullName>
    </recommendedName>
    <alternativeName>
        <fullName evidence="2">30S ribosomal protein S11, chloroplastic</fullName>
    </alternativeName>
</protein>
<geneLocation type="chloroplast"/>
<gene>
    <name evidence="1" type="primary">rps11</name>
</gene>
<feature type="chain" id="PRO_0000294921" description="Small ribosomal subunit protein uS11c">
    <location>
        <begin position="1"/>
        <end position="138"/>
    </location>
</feature>
<dbReference type="EMBL" id="DQ923117">
    <property type="protein sequence ID" value="ABI49897.1"/>
    <property type="molecule type" value="Genomic_DNA"/>
</dbReference>
<dbReference type="RefSeq" id="YP_740683.1">
    <property type="nucleotide sequence ID" value="NC_008336.1"/>
</dbReference>
<dbReference type="SMR" id="Q09FS8"/>
<dbReference type="GeneID" id="4271694"/>
<dbReference type="GO" id="GO:0009507">
    <property type="term" value="C:chloroplast"/>
    <property type="evidence" value="ECO:0007669"/>
    <property type="project" value="UniProtKB-SubCell"/>
</dbReference>
<dbReference type="GO" id="GO:1990904">
    <property type="term" value="C:ribonucleoprotein complex"/>
    <property type="evidence" value="ECO:0007669"/>
    <property type="project" value="UniProtKB-KW"/>
</dbReference>
<dbReference type="GO" id="GO:0005840">
    <property type="term" value="C:ribosome"/>
    <property type="evidence" value="ECO:0007669"/>
    <property type="project" value="UniProtKB-KW"/>
</dbReference>
<dbReference type="GO" id="GO:0019843">
    <property type="term" value="F:rRNA binding"/>
    <property type="evidence" value="ECO:0007669"/>
    <property type="project" value="UniProtKB-UniRule"/>
</dbReference>
<dbReference type="GO" id="GO:0003735">
    <property type="term" value="F:structural constituent of ribosome"/>
    <property type="evidence" value="ECO:0007669"/>
    <property type="project" value="InterPro"/>
</dbReference>
<dbReference type="GO" id="GO:0006412">
    <property type="term" value="P:translation"/>
    <property type="evidence" value="ECO:0007669"/>
    <property type="project" value="UniProtKB-UniRule"/>
</dbReference>
<dbReference type="FunFam" id="3.30.420.80:FF:000003">
    <property type="entry name" value="30S ribosomal protein S11, chloroplastic"/>
    <property type="match status" value="1"/>
</dbReference>
<dbReference type="Gene3D" id="3.30.420.80">
    <property type="entry name" value="Ribosomal protein S11"/>
    <property type="match status" value="1"/>
</dbReference>
<dbReference type="HAMAP" id="MF_01310">
    <property type="entry name" value="Ribosomal_uS11"/>
    <property type="match status" value="1"/>
</dbReference>
<dbReference type="InterPro" id="IPR001971">
    <property type="entry name" value="Ribosomal_uS11"/>
</dbReference>
<dbReference type="InterPro" id="IPR019981">
    <property type="entry name" value="Ribosomal_uS11_bac-type"/>
</dbReference>
<dbReference type="InterPro" id="IPR018102">
    <property type="entry name" value="Ribosomal_uS11_CS"/>
</dbReference>
<dbReference type="InterPro" id="IPR036967">
    <property type="entry name" value="Ribosomal_uS11_sf"/>
</dbReference>
<dbReference type="NCBIfam" id="NF003698">
    <property type="entry name" value="PRK05309.1"/>
    <property type="match status" value="1"/>
</dbReference>
<dbReference type="NCBIfam" id="TIGR03632">
    <property type="entry name" value="uS11_bact"/>
    <property type="match status" value="1"/>
</dbReference>
<dbReference type="PANTHER" id="PTHR11759">
    <property type="entry name" value="40S RIBOSOMAL PROTEIN S14/30S RIBOSOMAL PROTEIN S11"/>
    <property type="match status" value="1"/>
</dbReference>
<dbReference type="Pfam" id="PF00411">
    <property type="entry name" value="Ribosomal_S11"/>
    <property type="match status" value="1"/>
</dbReference>
<dbReference type="PIRSF" id="PIRSF002131">
    <property type="entry name" value="Ribosomal_S11"/>
    <property type="match status" value="1"/>
</dbReference>
<dbReference type="SUPFAM" id="SSF53137">
    <property type="entry name" value="Translational machinery components"/>
    <property type="match status" value="1"/>
</dbReference>
<dbReference type="PROSITE" id="PS00054">
    <property type="entry name" value="RIBOSOMAL_S11"/>
    <property type="match status" value="1"/>
</dbReference>
<organism>
    <name type="scientific">Nandina domestica</name>
    <name type="common">Heavenly bamboo</name>
    <dbReference type="NCBI Taxonomy" id="41776"/>
    <lineage>
        <taxon>Eukaryota</taxon>
        <taxon>Viridiplantae</taxon>
        <taxon>Streptophyta</taxon>
        <taxon>Embryophyta</taxon>
        <taxon>Tracheophyta</taxon>
        <taxon>Spermatophyta</taxon>
        <taxon>Magnoliopsida</taxon>
        <taxon>Ranunculales</taxon>
        <taxon>Berberidaceae</taxon>
        <taxon>Nandinoideae</taxon>
        <taxon>Nandineae</taxon>
        <taxon>Nandina</taxon>
    </lineage>
</organism>
<accession>Q09FS8</accession>
<comment type="subunit">
    <text evidence="1">Part of the 30S ribosomal subunit.</text>
</comment>
<comment type="subcellular location">
    <subcellularLocation>
        <location>Plastid</location>
        <location>Chloroplast</location>
    </subcellularLocation>
</comment>
<comment type="similarity">
    <text evidence="1">Belongs to the universal ribosomal protein uS11 family.</text>
</comment>
<evidence type="ECO:0000255" key="1">
    <source>
        <dbReference type="HAMAP-Rule" id="MF_01310"/>
    </source>
</evidence>
<evidence type="ECO:0000305" key="2"/>
<sequence>MTKPISRIGSRRNVRIGSRKSGRRIPKGVIHVQASFNNTIVTVTDIRGRVVSWSSAGTCGFRGTRRGTPFAAQTAASNAIRTVVDQGMQRAEVRIKGPGLGRDAALRAIRRSGILLSFVRDVTPMPHNGCRPPKKRRV</sequence>
<keyword id="KW-0150">Chloroplast</keyword>
<keyword id="KW-0934">Plastid</keyword>
<keyword id="KW-0687">Ribonucleoprotein</keyword>
<keyword id="KW-0689">Ribosomal protein</keyword>
<keyword id="KW-0694">RNA-binding</keyword>
<keyword id="KW-0699">rRNA-binding</keyword>
<reference key="1">
    <citation type="journal article" date="2006" name="BMC Plant Biol.">
        <title>Rapid and accurate pyrosequencing of angiosperm plastid genomes.</title>
        <authorList>
            <person name="Moore M.J."/>
            <person name="Dhingra A."/>
            <person name="Soltis P.S."/>
            <person name="Shaw R."/>
            <person name="Farmerie W.G."/>
            <person name="Folta K.M."/>
            <person name="Soltis D.E."/>
        </authorList>
    </citation>
    <scope>NUCLEOTIDE SEQUENCE [LARGE SCALE GENOMIC DNA]</scope>
</reference>
<proteinExistence type="inferred from homology"/>
<name>RR11_NANDO</name>